<name>YABA_BACAC</name>
<protein>
    <recommendedName>
        <fullName evidence="1">Replication initiation control protein YabA</fullName>
    </recommendedName>
</protein>
<comment type="function">
    <text evidence="1">Involved in control of chromosome replication initiation. Inhibits the cooperative binding of DnaA to the oriC region, thus negatively regulating initiation of chromosome replication. Inhibits the ability of DnaA-ATP to form a helix on DNA; does not disassemble preformed DnaA-DNA helices. Decreases the residence time of DnaA on the chromosome at its binding sites (oriC, replication forks and promoter-binding sites). Tethers DnaA to the replication machinery via the DNA polymerase beta sliding clamp subunit (dnaN). Associates with oriC and other DnaA targets on the chromosome in a DnaA-dependent manner.</text>
</comment>
<comment type="cofactor">
    <cofactor evidence="1">
        <name>Zn(2+)</name>
        <dbReference type="ChEBI" id="CHEBI:29105"/>
    </cofactor>
    <text evidence="1">Binds 1 zinc ion per subunit.</text>
</comment>
<comment type="subunit">
    <text evidence="1">Homotetramer. Interacts with both DnaA and DnaN, acting as a bridge between these two proteins.</text>
</comment>
<comment type="subcellular location">
    <subcellularLocation>
        <location evidence="1">Cytoplasm</location>
        <location evidence="1">Nucleoid</location>
    </subcellularLocation>
    <text evidence="1">Localizes in tight foci, which correspond to the replisome at mid-cell throughout the cell cycle.</text>
</comment>
<comment type="similarity">
    <text evidence="1">Belongs to the YabA family.</text>
</comment>
<proteinExistence type="inferred from homology"/>
<feature type="chain" id="PRO_1000164303" description="Replication initiation control protein YabA">
    <location>
        <begin position="1"/>
        <end position="116"/>
    </location>
</feature>
<feature type="binding site" evidence="1">
    <location>
        <position position="91"/>
    </location>
    <ligand>
        <name>Zn(2+)</name>
        <dbReference type="ChEBI" id="CHEBI:29105"/>
    </ligand>
</feature>
<feature type="binding site" evidence="1">
    <location>
        <position position="93"/>
    </location>
    <ligand>
        <name>Zn(2+)</name>
        <dbReference type="ChEBI" id="CHEBI:29105"/>
    </ligand>
</feature>
<feature type="binding site" evidence="1">
    <location>
        <position position="106"/>
    </location>
    <ligand>
        <name>Zn(2+)</name>
        <dbReference type="ChEBI" id="CHEBI:29105"/>
    </ligand>
</feature>
<feature type="binding site" evidence="1">
    <location>
        <position position="109"/>
    </location>
    <ligand>
        <name>Zn(2+)</name>
        <dbReference type="ChEBI" id="CHEBI:29105"/>
    </ligand>
</feature>
<dbReference type="EMBL" id="CP001215">
    <property type="protein sequence ID" value="ACP12472.1"/>
    <property type="molecule type" value="Genomic_DNA"/>
</dbReference>
<dbReference type="RefSeq" id="WP_000412056.1">
    <property type="nucleotide sequence ID" value="NC_012581.1"/>
</dbReference>
<dbReference type="SMR" id="C3LJ05"/>
<dbReference type="GeneID" id="93011037"/>
<dbReference type="KEGG" id="bah:BAMEG_0042"/>
<dbReference type="HOGENOM" id="CLU_157169_0_0_9"/>
<dbReference type="GO" id="GO:0009295">
    <property type="term" value="C:nucleoid"/>
    <property type="evidence" value="ECO:0007669"/>
    <property type="project" value="UniProtKB-SubCell"/>
</dbReference>
<dbReference type="GO" id="GO:0006260">
    <property type="term" value="P:DNA replication"/>
    <property type="evidence" value="ECO:0007669"/>
    <property type="project" value="UniProtKB-UniRule"/>
</dbReference>
<dbReference type="Gene3D" id="1.20.5.1160">
    <property type="entry name" value="Vasodilator-stimulated phosphoprotein"/>
    <property type="match status" value="1"/>
</dbReference>
<dbReference type="HAMAP" id="MF_01159">
    <property type="entry name" value="YabA"/>
    <property type="match status" value="1"/>
</dbReference>
<dbReference type="InterPro" id="IPR010377">
    <property type="entry name" value="YabA"/>
</dbReference>
<dbReference type="NCBIfam" id="NF009644">
    <property type="entry name" value="PRK13169.1-5"/>
    <property type="match status" value="1"/>
</dbReference>
<dbReference type="Pfam" id="PF06156">
    <property type="entry name" value="YabA"/>
    <property type="match status" value="1"/>
</dbReference>
<dbReference type="PIRSF" id="PIRSF021439">
    <property type="entry name" value="DUF972"/>
    <property type="match status" value="1"/>
</dbReference>
<organism>
    <name type="scientific">Bacillus anthracis (strain CDC 684 / NRRL 3495)</name>
    <dbReference type="NCBI Taxonomy" id="568206"/>
    <lineage>
        <taxon>Bacteria</taxon>
        <taxon>Bacillati</taxon>
        <taxon>Bacillota</taxon>
        <taxon>Bacilli</taxon>
        <taxon>Bacillales</taxon>
        <taxon>Bacillaceae</taxon>
        <taxon>Bacillus</taxon>
        <taxon>Bacillus cereus group</taxon>
    </lineage>
</organism>
<evidence type="ECO:0000255" key="1">
    <source>
        <dbReference type="HAMAP-Rule" id="MF_01159"/>
    </source>
</evidence>
<gene>
    <name evidence="1" type="primary">yabA</name>
    <name type="ordered locus">BAMEG_0042</name>
</gene>
<sequence>MEKKDIFASVSSMEEQIGHLYKQLGELKQHLAELLEENQHIKMENENLRHRFEEVQIKEKQKTQKRKEVKPKTDIGEGYDNLARLYQEGFHICNLHYGSVRKEGDCLFCLSFLNKK</sequence>
<reference key="1">
    <citation type="submission" date="2008-10" db="EMBL/GenBank/DDBJ databases">
        <title>Genome sequence of Bacillus anthracis str. CDC 684.</title>
        <authorList>
            <person name="Dodson R.J."/>
            <person name="Munk A.C."/>
            <person name="Brettin T."/>
            <person name="Bruce D."/>
            <person name="Detter C."/>
            <person name="Tapia R."/>
            <person name="Han C."/>
            <person name="Sutton G."/>
            <person name="Sims D."/>
        </authorList>
    </citation>
    <scope>NUCLEOTIDE SEQUENCE [LARGE SCALE GENOMIC DNA]</scope>
    <source>
        <strain>CDC 684 / NRRL 3495</strain>
    </source>
</reference>
<accession>C3LJ05</accession>
<keyword id="KW-0963">Cytoplasm</keyword>
<keyword id="KW-0235">DNA replication</keyword>
<keyword id="KW-0236">DNA replication inhibitor</keyword>
<keyword id="KW-0479">Metal-binding</keyword>
<keyword id="KW-0862">Zinc</keyword>